<protein>
    <recommendedName>
        <fullName>Pro-FMRFamide-related neuropeptide FF</fullName>
    </recommendedName>
    <alternativeName>
        <fullName>FMRFamide-related peptides</fullName>
    </alternativeName>
    <component>
        <recommendedName>
            <fullName>Neuropeptide SF</fullName>
            <shortName>NPSF</shortName>
        </recommendedName>
    </component>
    <component>
        <recommendedName>
            <fullName>Neuropeptide FF</fullName>
            <shortName>NPFF</shortName>
        </recommendedName>
    </component>
    <component>
        <recommendedName>
            <fullName>Neuropeptide AF</fullName>
            <shortName>NPAF</shortName>
        </recommendedName>
    </component>
</protein>
<proteinExistence type="evidence at protein level"/>
<evidence type="ECO:0000250" key="1"/>
<evidence type="ECO:0000255" key="2"/>
<evidence type="ECO:0000256" key="3">
    <source>
        <dbReference type="SAM" id="MobiDB-lite"/>
    </source>
</evidence>
<evidence type="ECO:0000269" key="4">
    <source>
    </source>
</evidence>
<evidence type="ECO:0000303" key="5">
    <source>
    </source>
</evidence>
<evidence type="ECO:0000305" key="6"/>
<evidence type="ECO:0000312" key="7">
    <source>
        <dbReference type="HGNC" id="HGNC:7901"/>
    </source>
</evidence>
<name>NPFF_HUMAN</name>
<reference key="1">
    <citation type="journal article" date="1997" name="FEBS Lett.">
        <title>A human gene encoding morphine modulating peptides related to NPFF and FMRFamide.</title>
        <authorList>
            <person name="Perry S.J."/>
            <person name="Yi-Kung Huang E."/>
            <person name="Cronk D."/>
            <person name="Bagust J."/>
            <person name="Sharma R."/>
            <person name="Walker R.J."/>
            <person name="Wilson S."/>
            <person name="Burke J.F."/>
        </authorList>
    </citation>
    <scope>NUCLEOTIDE SEQUENCE [MRNA] (ISOFORM 1)</scope>
    <source>
        <tissue>Testis</tissue>
    </source>
</reference>
<reference key="2">
    <citation type="journal article" date="2006" name="Nature">
        <title>The finished DNA sequence of human chromosome 12.</title>
        <authorList>
            <person name="Scherer S.E."/>
            <person name="Muzny D.M."/>
            <person name="Buhay C.J."/>
            <person name="Chen R."/>
            <person name="Cree A."/>
            <person name="Ding Y."/>
            <person name="Dugan-Rocha S."/>
            <person name="Gill R."/>
            <person name="Gunaratne P."/>
            <person name="Harris R.A."/>
            <person name="Hawes A.C."/>
            <person name="Hernandez J."/>
            <person name="Hodgson A.V."/>
            <person name="Hume J."/>
            <person name="Jackson A."/>
            <person name="Khan Z.M."/>
            <person name="Kovar-Smith C."/>
            <person name="Lewis L.R."/>
            <person name="Lozado R.J."/>
            <person name="Metzker M.L."/>
            <person name="Milosavljevic A."/>
            <person name="Miner G.R."/>
            <person name="Montgomery K.T."/>
            <person name="Morgan M.B."/>
            <person name="Nazareth L.V."/>
            <person name="Scott G."/>
            <person name="Sodergren E."/>
            <person name="Song X.-Z."/>
            <person name="Steffen D."/>
            <person name="Lovering R.C."/>
            <person name="Wheeler D.A."/>
            <person name="Worley K.C."/>
            <person name="Yuan Y."/>
            <person name="Zhang Z."/>
            <person name="Adams C.Q."/>
            <person name="Ansari-Lari M.A."/>
            <person name="Ayele M."/>
            <person name="Brown M.J."/>
            <person name="Chen G."/>
            <person name="Chen Z."/>
            <person name="Clerc-Blankenburg K.P."/>
            <person name="Davis C."/>
            <person name="Delgado O."/>
            <person name="Dinh H.H."/>
            <person name="Draper H."/>
            <person name="Gonzalez-Garay M.L."/>
            <person name="Havlak P."/>
            <person name="Jackson L.R."/>
            <person name="Jacob L.S."/>
            <person name="Kelly S.H."/>
            <person name="Li L."/>
            <person name="Li Z."/>
            <person name="Liu J."/>
            <person name="Liu W."/>
            <person name="Lu J."/>
            <person name="Maheshwari M."/>
            <person name="Nguyen B.-V."/>
            <person name="Okwuonu G.O."/>
            <person name="Pasternak S."/>
            <person name="Perez L.M."/>
            <person name="Plopper F.J.H."/>
            <person name="Santibanez J."/>
            <person name="Shen H."/>
            <person name="Tabor P.E."/>
            <person name="Verduzco D."/>
            <person name="Waldron L."/>
            <person name="Wang Q."/>
            <person name="Williams G.A."/>
            <person name="Zhang J."/>
            <person name="Zhou J."/>
            <person name="Allen C.C."/>
            <person name="Amin A.G."/>
            <person name="Anyalebechi V."/>
            <person name="Bailey M."/>
            <person name="Barbaria J.A."/>
            <person name="Bimage K.E."/>
            <person name="Bryant N.P."/>
            <person name="Burch P.E."/>
            <person name="Burkett C.E."/>
            <person name="Burrell K.L."/>
            <person name="Calderon E."/>
            <person name="Cardenas V."/>
            <person name="Carter K."/>
            <person name="Casias K."/>
            <person name="Cavazos I."/>
            <person name="Cavazos S.R."/>
            <person name="Ceasar H."/>
            <person name="Chacko J."/>
            <person name="Chan S.N."/>
            <person name="Chavez D."/>
            <person name="Christopoulos C."/>
            <person name="Chu J."/>
            <person name="Cockrell R."/>
            <person name="Cox C.D."/>
            <person name="Dang M."/>
            <person name="Dathorne S.R."/>
            <person name="David R."/>
            <person name="Davis C.M."/>
            <person name="Davy-Carroll L."/>
            <person name="Deshazo D.R."/>
            <person name="Donlin J.E."/>
            <person name="D'Souza L."/>
            <person name="Eaves K.A."/>
            <person name="Egan A."/>
            <person name="Emery-Cohen A.J."/>
            <person name="Escotto M."/>
            <person name="Flagg N."/>
            <person name="Forbes L.D."/>
            <person name="Gabisi A.M."/>
            <person name="Garza M."/>
            <person name="Hamilton C."/>
            <person name="Henderson N."/>
            <person name="Hernandez O."/>
            <person name="Hines S."/>
            <person name="Hogues M.E."/>
            <person name="Huang M."/>
            <person name="Idlebird D.G."/>
            <person name="Johnson R."/>
            <person name="Jolivet A."/>
            <person name="Jones S."/>
            <person name="Kagan R."/>
            <person name="King L.M."/>
            <person name="Leal B."/>
            <person name="Lebow H."/>
            <person name="Lee S."/>
            <person name="LeVan J.M."/>
            <person name="Lewis L.C."/>
            <person name="London P."/>
            <person name="Lorensuhewa L.M."/>
            <person name="Loulseged H."/>
            <person name="Lovett D.A."/>
            <person name="Lucier A."/>
            <person name="Lucier R.L."/>
            <person name="Ma J."/>
            <person name="Madu R.C."/>
            <person name="Mapua P."/>
            <person name="Martindale A.D."/>
            <person name="Martinez E."/>
            <person name="Massey E."/>
            <person name="Mawhiney S."/>
            <person name="Meador M.G."/>
            <person name="Mendez S."/>
            <person name="Mercado C."/>
            <person name="Mercado I.C."/>
            <person name="Merritt C.E."/>
            <person name="Miner Z.L."/>
            <person name="Minja E."/>
            <person name="Mitchell T."/>
            <person name="Mohabbat F."/>
            <person name="Mohabbat K."/>
            <person name="Montgomery B."/>
            <person name="Moore N."/>
            <person name="Morris S."/>
            <person name="Munidasa M."/>
            <person name="Ngo R.N."/>
            <person name="Nguyen N.B."/>
            <person name="Nickerson E."/>
            <person name="Nwaokelemeh O.O."/>
            <person name="Nwokenkwo S."/>
            <person name="Obregon M."/>
            <person name="Oguh M."/>
            <person name="Oragunye N."/>
            <person name="Oviedo R.J."/>
            <person name="Parish B.J."/>
            <person name="Parker D.N."/>
            <person name="Parrish J."/>
            <person name="Parks K.L."/>
            <person name="Paul H.A."/>
            <person name="Payton B.A."/>
            <person name="Perez A."/>
            <person name="Perrin W."/>
            <person name="Pickens A."/>
            <person name="Primus E.L."/>
            <person name="Pu L.-L."/>
            <person name="Puazo M."/>
            <person name="Quiles M.M."/>
            <person name="Quiroz J.B."/>
            <person name="Rabata D."/>
            <person name="Reeves K."/>
            <person name="Ruiz S.J."/>
            <person name="Shao H."/>
            <person name="Sisson I."/>
            <person name="Sonaike T."/>
            <person name="Sorelle R.P."/>
            <person name="Sutton A.E."/>
            <person name="Svatek A.F."/>
            <person name="Svetz L.A."/>
            <person name="Tamerisa K.S."/>
            <person name="Taylor T.R."/>
            <person name="Teague B."/>
            <person name="Thomas N."/>
            <person name="Thorn R.D."/>
            <person name="Trejos Z.Y."/>
            <person name="Trevino B.K."/>
            <person name="Ukegbu O.N."/>
            <person name="Urban J.B."/>
            <person name="Vasquez L.I."/>
            <person name="Vera V.A."/>
            <person name="Villasana D.M."/>
            <person name="Wang L."/>
            <person name="Ward-Moore S."/>
            <person name="Warren J.T."/>
            <person name="Wei X."/>
            <person name="White F."/>
            <person name="Williamson A.L."/>
            <person name="Wleczyk R."/>
            <person name="Wooden H.S."/>
            <person name="Wooden S.H."/>
            <person name="Yen J."/>
            <person name="Yoon L."/>
            <person name="Yoon V."/>
            <person name="Zorrilla S.E."/>
            <person name="Nelson D."/>
            <person name="Kucherlapati R."/>
            <person name="Weinstock G."/>
            <person name="Gibbs R.A."/>
        </authorList>
    </citation>
    <scope>NUCLEOTIDE SEQUENCE [LARGE SCALE GENOMIC DNA]</scope>
</reference>
<reference key="3">
    <citation type="submission" date="2005-07" db="EMBL/GenBank/DDBJ databases">
        <authorList>
            <person name="Mural R.J."/>
            <person name="Istrail S."/>
            <person name="Sutton G."/>
            <person name="Florea L."/>
            <person name="Halpern A.L."/>
            <person name="Mobarry C.M."/>
            <person name="Lippert R."/>
            <person name="Walenz B."/>
            <person name="Shatkay H."/>
            <person name="Dew I."/>
            <person name="Miller J.R."/>
            <person name="Flanigan M.J."/>
            <person name="Edwards N.J."/>
            <person name="Bolanos R."/>
            <person name="Fasulo D."/>
            <person name="Halldorsson B.V."/>
            <person name="Hannenhalli S."/>
            <person name="Turner R."/>
            <person name="Yooseph S."/>
            <person name="Lu F."/>
            <person name="Nusskern D.R."/>
            <person name="Shue B.C."/>
            <person name="Zheng X.H."/>
            <person name="Zhong F."/>
            <person name="Delcher A.L."/>
            <person name="Huson D.H."/>
            <person name="Kravitz S.A."/>
            <person name="Mouchard L."/>
            <person name="Reinert K."/>
            <person name="Remington K.A."/>
            <person name="Clark A.G."/>
            <person name="Waterman M.S."/>
            <person name="Eichler E.E."/>
            <person name="Adams M.D."/>
            <person name="Hunkapiller M.W."/>
            <person name="Myers E.W."/>
            <person name="Venter J.C."/>
        </authorList>
    </citation>
    <scope>NUCLEOTIDE SEQUENCE [LARGE SCALE GENOMIC DNA]</scope>
</reference>
<reference key="4">
    <citation type="journal article" date="2004" name="Genome Res.">
        <title>The status, quality, and expansion of the NIH full-length cDNA project: the Mammalian Gene Collection (MGC).</title>
        <authorList>
            <consortium name="The MGC Project Team"/>
        </authorList>
    </citation>
    <scope>NUCLEOTIDE SEQUENCE [LARGE SCALE MRNA] (ISOFORM 2)</scope>
</reference>
<reference key="5">
    <citation type="journal article" date="2001" name="Neuropharmacology">
        <title>Selective modulation of heteromeric ASIC proton-gated channels by neuropeptide FF.</title>
        <authorList>
            <person name="Catarsi S."/>
            <person name="Babinski K."/>
            <person name="Seguela P."/>
        </authorList>
    </citation>
    <scope>FUNCTION</scope>
</reference>
<dbReference type="EMBL" id="AF005271">
    <property type="protein sequence ID" value="AAB64288.1"/>
    <property type="molecule type" value="mRNA"/>
</dbReference>
<dbReference type="EMBL" id="AC023509">
    <property type="status" value="NOT_ANNOTATED_CDS"/>
    <property type="molecule type" value="Genomic_DNA"/>
</dbReference>
<dbReference type="EMBL" id="CH471054">
    <property type="protein sequence ID" value="EAW96721.1"/>
    <property type="molecule type" value="Genomic_DNA"/>
</dbReference>
<dbReference type="EMBL" id="BC104234">
    <property type="protein sequence ID" value="AAI04235.1"/>
    <property type="molecule type" value="mRNA"/>
</dbReference>
<dbReference type="EMBL" id="BC104235">
    <property type="protein sequence ID" value="AAI04236.1"/>
    <property type="molecule type" value="mRNA"/>
</dbReference>
<dbReference type="CCDS" id="CCDS8862.1">
    <molecule id="O15130-1"/>
</dbReference>
<dbReference type="RefSeq" id="NP_001307225.1">
    <molecule id="O15130-2"/>
    <property type="nucleotide sequence ID" value="NM_001320296.2"/>
</dbReference>
<dbReference type="RefSeq" id="NP_003708.1">
    <molecule id="O15130-1"/>
    <property type="nucleotide sequence ID" value="NM_003717.4"/>
</dbReference>
<dbReference type="BioGRID" id="114175">
    <property type="interactions" value="2"/>
</dbReference>
<dbReference type="FunCoup" id="O15130">
    <property type="interactions" value="376"/>
</dbReference>
<dbReference type="IntAct" id="O15130">
    <property type="interactions" value="7"/>
</dbReference>
<dbReference type="STRING" id="9606.ENSP00000267017"/>
<dbReference type="BioMuta" id="NPFF"/>
<dbReference type="PaxDb" id="9606-ENSP00000267017"/>
<dbReference type="Antibodypedia" id="15271">
    <property type="antibodies" value="135 antibodies from 23 providers"/>
</dbReference>
<dbReference type="DNASU" id="8620"/>
<dbReference type="Ensembl" id="ENST00000267017.4">
    <molecule id="O15130-1"/>
    <property type="protein sequence ID" value="ENSP00000267017.3"/>
    <property type="gene ID" value="ENSG00000139574.9"/>
</dbReference>
<dbReference type="GeneID" id="8620"/>
<dbReference type="KEGG" id="hsa:8620"/>
<dbReference type="MANE-Select" id="ENST00000267017.4">
    <property type="protein sequence ID" value="ENSP00000267017.3"/>
    <property type="RefSeq nucleotide sequence ID" value="NM_003717.4"/>
    <property type="RefSeq protein sequence ID" value="NP_003708.1"/>
</dbReference>
<dbReference type="UCSC" id="uc001sdw.1">
    <molecule id="O15130-1"/>
    <property type="organism name" value="human"/>
</dbReference>
<dbReference type="AGR" id="HGNC:7901"/>
<dbReference type="CTD" id="8620"/>
<dbReference type="DisGeNET" id="8620"/>
<dbReference type="GeneCards" id="NPFF"/>
<dbReference type="HGNC" id="HGNC:7901">
    <property type="gene designation" value="NPFF"/>
</dbReference>
<dbReference type="HPA" id="ENSG00000139574">
    <property type="expression patterns" value="Tissue enriched (epididymis)"/>
</dbReference>
<dbReference type="MIM" id="604643">
    <property type="type" value="gene"/>
</dbReference>
<dbReference type="neXtProt" id="NX_O15130"/>
<dbReference type="OpenTargets" id="ENSG00000139574"/>
<dbReference type="PharmGKB" id="PA31704"/>
<dbReference type="VEuPathDB" id="HostDB:ENSG00000139574"/>
<dbReference type="eggNOG" id="ENOG502S60B">
    <property type="taxonomic scope" value="Eukaryota"/>
</dbReference>
<dbReference type="GeneTree" id="ENSGT00390000015021"/>
<dbReference type="HOGENOM" id="CLU_2102411_0_0_1"/>
<dbReference type="InParanoid" id="O15130"/>
<dbReference type="OMA" id="EGLHSQF"/>
<dbReference type="OrthoDB" id="8878267at2759"/>
<dbReference type="PAN-GO" id="O15130">
    <property type="GO annotations" value="7 GO annotations based on evolutionary models"/>
</dbReference>
<dbReference type="PhylomeDB" id="O15130"/>
<dbReference type="TreeFam" id="TF330924"/>
<dbReference type="PathwayCommons" id="O15130"/>
<dbReference type="Reactome" id="R-HSA-389397">
    <property type="pathway name" value="Orexin and neuropeptides FF and QRFP bind to their respective receptors"/>
</dbReference>
<dbReference type="Reactome" id="R-HSA-416476">
    <property type="pathway name" value="G alpha (q) signalling events"/>
</dbReference>
<dbReference type="SignaLink" id="O15130"/>
<dbReference type="SIGNOR" id="O15130"/>
<dbReference type="BioGRID-ORCS" id="8620">
    <property type="hits" value="11 hits in 1143 CRISPR screens"/>
</dbReference>
<dbReference type="GeneWiki" id="NPFF"/>
<dbReference type="GenomeRNAi" id="8620"/>
<dbReference type="Pharos" id="O15130">
    <property type="development level" value="Tbio"/>
</dbReference>
<dbReference type="PRO" id="PR:O15130"/>
<dbReference type="Proteomes" id="UP000005640">
    <property type="component" value="Chromosome 12"/>
</dbReference>
<dbReference type="RNAct" id="O15130">
    <property type="molecule type" value="protein"/>
</dbReference>
<dbReference type="Bgee" id="ENSG00000139574">
    <property type="expression patterns" value="Expressed in male germ line stem cell (sensu Vertebrata) in testis and 79 other cell types or tissues"/>
</dbReference>
<dbReference type="GO" id="GO:0043679">
    <property type="term" value="C:axon terminus"/>
    <property type="evidence" value="ECO:0000318"/>
    <property type="project" value="GO_Central"/>
</dbReference>
<dbReference type="GO" id="GO:0030425">
    <property type="term" value="C:dendrite"/>
    <property type="evidence" value="ECO:0000318"/>
    <property type="project" value="GO_Central"/>
</dbReference>
<dbReference type="GO" id="GO:0005576">
    <property type="term" value="C:extracellular region"/>
    <property type="evidence" value="ECO:0000304"/>
    <property type="project" value="Reactome"/>
</dbReference>
<dbReference type="GO" id="GO:0005615">
    <property type="term" value="C:extracellular space"/>
    <property type="evidence" value="ECO:0000318"/>
    <property type="project" value="GO_Central"/>
</dbReference>
<dbReference type="GO" id="GO:0098992">
    <property type="term" value="C:neuronal dense core vesicle"/>
    <property type="evidence" value="ECO:0007669"/>
    <property type="project" value="Ensembl"/>
</dbReference>
<dbReference type="GO" id="GO:0043204">
    <property type="term" value="C:perikaryon"/>
    <property type="evidence" value="ECO:0000318"/>
    <property type="project" value="GO_Central"/>
</dbReference>
<dbReference type="GO" id="GO:0098794">
    <property type="term" value="C:postsynapse"/>
    <property type="evidence" value="ECO:0007669"/>
    <property type="project" value="GOC"/>
</dbReference>
<dbReference type="GO" id="GO:0001664">
    <property type="term" value="F:G protein-coupled receptor binding"/>
    <property type="evidence" value="ECO:0000318"/>
    <property type="project" value="GO_Central"/>
</dbReference>
<dbReference type="GO" id="GO:0160041">
    <property type="term" value="F:neuropeptide activity"/>
    <property type="evidence" value="ECO:0000314"/>
    <property type="project" value="UniProt"/>
</dbReference>
<dbReference type="GO" id="GO:0005184">
    <property type="term" value="F:neuropeptide hormone activity"/>
    <property type="evidence" value="ECO:0000318"/>
    <property type="project" value="GO_Central"/>
</dbReference>
<dbReference type="GO" id="GO:0005102">
    <property type="term" value="F:signaling receptor binding"/>
    <property type="evidence" value="ECO:0000304"/>
    <property type="project" value="ProtInc"/>
</dbReference>
<dbReference type="GO" id="GO:0002438">
    <property type="term" value="P:acute inflammatory response to antigenic stimulus"/>
    <property type="evidence" value="ECO:0007669"/>
    <property type="project" value="Ensembl"/>
</dbReference>
<dbReference type="GO" id="GO:0007268">
    <property type="term" value="P:chemical synaptic transmission"/>
    <property type="evidence" value="ECO:0000304"/>
    <property type="project" value="ProtInc"/>
</dbReference>
<dbReference type="GO" id="GO:0060079">
    <property type="term" value="P:excitatory postsynaptic potential"/>
    <property type="evidence" value="ECO:0000318"/>
    <property type="project" value="GO_Central"/>
</dbReference>
<dbReference type="GO" id="GO:0060135">
    <property type="term" value="P:maternal process involved in female pregnancy"/>
    <property type="evidence" value="ECO:0007669"/>
    <property type="project" value="Ensembl"/>
</dbReference>
<dbReference type="GO" id="GO:0032099">
    <property type="term" value="P:negative regulation of appetite"/>
    <property type="evidence" value="ECO:0007669"/>
    <property type="project" value="Ensembl"/>
</dbReference>
<dbReference type="GO" id="GO:0010459">
    <property type="term" value="P:negative regulation of heart rate"/>
    <property type="evidence" value="ECO:0007669"/>
    <property type="project" value="Ensembl"/>
</dbReference>
<dbReference type="GO" id="GO:0046676">
    <property type="term" value="P:negative regulation of insulin secretion"/>
    <property type="evidence" value="ECO:0007669"/>
    <property type="project" value="Ensembl"/>
</dbReference>
<dbReference type="GO" id="GO:0007218">
    <property type="term" value="P:neuropeptide signaling pathway"/>
    <property type="evidence" value="ECO:0000314"/>
    <property type="project" value="UniProt"/>
</dbReference>
<dbReference type="GO" id="GO:0045777">
    <property type="term" value="P:positive regulation of blood pressure"/>
    <property type="evidence" value="ECO:0007669"/>
    <property type="project" value="Ensembl"/>
</dbReference>
<dbReference type="GO" id="GO:0007204">
    <property type="term" value="P:positive regulation of cytosolic calcium ion concentration"/>
    <property type="evidence" value="ECO:0007669"/>
    <property type="project" value="Ensembl"/>
</dbReference>
<dbReference type="GO" id="GO:0003254">
    <property type="term" value="P:regulation of membrane depolarization"/>
    <property type="evidence" value="ECO:0007669"/>
    <property type="project" value="Ensembl"/>
</dbReference>
<dbReference type="GO" id="GO:0009410">
    <property type="term" value="P:response to xenobiotic stimulus"/>
    <property type="evidence" value="ECO:0007669"/>
    <property type="project" value="Ensembl"/>
</dbReference>
<dbReference type="GO" id="GO:0070253">
    <property type="term" value="P:somatostatin secretion"/>
    <property type="evidence" value="ECO:0007669"/>
    <property type="project" value="Ensembl"/>
</dbReference>
<dbReference type="GO" id="GO:0021510">
    <property type="term" value="P:spinal cord development"/>
    <property type="evidence" value="ECO:0007669"/>
    <property type="project" value="Ensembl"/>
</dbReference>
<dbReference type="GO" id="GO:0030103">
    <property type="term" value="P:vasopressin secretion"/>
    <property type="evidence" value="ECO:0007669"/>
    <property type="project" value="Ensembl"/>
</dbReference>
<dbReference type="InterPro" id="IPR008065">
    <property type="entry name" value="NPFF"/>
</dbReference>
<dbReference type="PANTHER" id="PTHR15044">
    <property type="entry name" value="NEUROPEPTIDE FF"/>
    <property type="match status" value="1"/>
</dbReference>
<dbReference type="PANTHER" id="PTHR15044:SF0">
    <property type="entry name" value="PRO-FMRFAMIDE-RELATED NEUROPEPTIDE FF"/>
    <property type="match status" value="1"/>
</dbReference>
<dbReference type="Pfam" id="PF15085">
    <property type="entry name" value="NPFF"/>
    <property type="match status" value="1"/>
</dbReference>
<dbReference type="PIRSF" id="PIRSF038092">
    <property type="entry name" value="FMRFamid-rel_pep_precur"/>
    <property type="match status" value="1"/>
</dbReference>
<dbReference type="PRINTS" id="PR01682">
    <property type="entry name" value="FMRFAMIDEPEP"/>
</dbReference>
<organism>
    <name type="scientific">Homo sapiens</name>
    <name type="common">Human</name>
    <dbReference type="NCBI Taxonomy" id="9606"/>
    <lineage>
        <taxon>Eukaryota</taxon>
        <taxon>Metazoa</taxon>
        <taxon>Chordata</taxon>
        <taxon>Craniata</taxon>
        <taxon>Vertebrata</taxon>
        <taxon>Euteleostomi</taxon>
        <taxon>Mammalia</taxon>
        <taxon>Eutheria</taxon>
        <taxon>Euarchontoglires</taxon>
        <taxon>Primates</taxon>
        <taxon>Haplorrhini</taxon>
        <taxon>Catarrhini</taxon>
        <taxon>Hominidae</taxon>
        <taxon>Homo</taxon>
    </lineage>
</organism>
<gene>
    <name evidence="7" type="primary">NPFF</name>
</gene>
<keyword id="KW-0025">Alternative splicing</keyword>
<keyword id="KW-0027">Amidation</keyword>
<keyword id="KW-0165">Cleavage on pair of basic residues</keyword>
<keyword id="KW-0527">Neuropeptide</keyword>
<keyword id="KW-1185">Reference proteome</keyword>
<keyword id="KW-0964">Secreted</keyword>
<keyword id="KW-0732">Signal</keyword>
<sequence length="113" mass="12440">MDSRQAAALLVLLLLIDGGCAEGPGGQQEDQLSAEEDSEPLPPQDAQTSGSLLHYLLQAMERPGRSQAFLFQPQRFGRNTQGSWRNEWLSPRAGEGLNSQFWSLAAPQRFGKK</sequence>
<comment type="function">
    <text evidence="4">Morphine modulating peptides. Have wide-ranging physiologic effects, including the modulation of morphine-induced analgesia, elevation of arterial blood pressure, and increased somatostatin secretion from the pancreas. Neuropeptide FF potentiates and sensitizes ASIC1 and ASIC3 channels.</text>
</comment>
<comment type="interaction">
    <interactant intactId="EBI-25840002">
        <id>O15130-2</id>
    </interactant>
    <interactant intactId="EBI-355710">
        <id>P48643</id>
        <label>CCT5</label>
    </interactant>
    <organismsDiffer>false</organismsDiffer>
    <experiments>3</experiments>
</comment>
<comment type="interaction">
    <interactant intactId="EBI-25840002">
        <id>O15130-2</id>
    </interactant>
    <interactant intactId="EBI-2115097">
        <id>P07339</id>
        <label>CTSD</label>
    </interactant>
    <organismsDiffer>false</organismsDiffer>
    <experiments>3</experiments>
</comment>
<comment type="interaction">
    <interactant intactId="EBI-25840002">
        <id>O15130-2</id>
    </interactant>
    <interactant intactId="EBI-466029">
        <id>P42858</id>
        <label>HTT</label>
    </interactant>
    <organismsDiffer>false</organismsDiffer>
    <experiments>18</experiments>
</comment>
<comment type="interaction">
    <interactant intactId="EBI-25840002">
        <id>O15130-2</id>
    </interactant>
    <interactant intactId="EBI-21591415">
        <id>P13473-2</id>
        <label>LAMP2</label>
    </interactant>
    <organismsDiffer>false</organismsDiffer>
    <experiments>3</experiments>
</comment>
<comment type="interaction">
    <interactant intactId="EBI-25840002">
        <id>O15130-2</id>
    </interactant>
    <interactant intactId="EBI-2623095">
        <id>Q9Y371</id>
        <label>SH3GLB1</label>
    </interactant>
    <organismsDiffer>false</organismsDiffer>
    <experiments>3</experiments>
</comment>
<comment type="interaction">
    <interactant intactId="EBI-25840002">
        <id>O15130-2</id>
    </interactant>
    <interactant intactId="EBI-720609">
        <id>O76024</id>
        <label>WFS1</label>
    </interactant>
    <organismsDiffer>false</organismsDiffer>
    <experiments>3</experiments>
</comment>
<comment type="subcellular location">
    <subcellularLocation>
        <location>Secreted</location>
    </subcellularLocation>
</comment>
<comment type="alternative products">
    <event type="alternative splicing"/>
    <isoform>
        <id>O15130-1</id>
        <name>1</name>
        <sequence type="displayed"/>
    </isoform>
    <isoform>
        <id>O15130-2</id>
        <name>2</name>
        <sequence type="described" ref="VSP_056475"/>
    </isoform>
</comment>
<comment type="similarity">
    <text evidence="6">Belongs to the FARP (FMRFamide related peptide) family.</text>
</comment>
<feature type="signal peptide" evidence="2">
    <location>
        <begin position="1"/>
        <end position="20"/>
    </location>
</feature>
<feature type="propeptide" id="PRO_0000009898">
    <location>
        <begin position="21"/>
        <end position="65"/>
    </location>
</feature>
<feature type="peptide" id="PRO_0000009899" description="Neuropeptide SF">
    <location>
        <begin position="66"/>
        <end position="76"/>
    </location>
</feature>
<feature type="peptide" id="PRO_0000009900" description="Neuropeptide FF">
    <location>
        <begin position="69"/>
        <end position="76"/>
    </location>
</feature>
<feature type="propeptide" id="PRO_0000009901">
    <location>
        <begin position="79"/>
        <end position="92"/>
    </location>
</feature>
<feature type="peptide" id="PRO_0000009902" description="Neuropeptide AF">
    <location>
        <begin position="93"/>
        <end position="110"/>
    </location>
</feature>
<feature type="region of interest" description="Disordered" evidence="3">
    <location>
        <begin position="22"/>
        <end position="48"/>
    </location>
</feature>
<feature type="modified residue" description="Phenylalanine amide" evidence="1">
    <location>
        <position position="76"/>
    </location>
</feature>
<feature type="modified residue" description="Phenylalanine amide" evidence="1">
    <location>
        <position position="110"/>
    </location>
</feature>
<feature type="splice variant" id="VSP_056475" description="In isoform 2." evidence="5">
    <original>MDSRQAAALLVLLLLIDGGCAEGPGGQQEDQLSA</original>
    <variation>MVPQPPTTCPWKPVPSPCDLRVQGICPSSFPDTPLAQ</variation>
    <location>
        <begin position="1"/>
        <end position="34"/>
    </location>
</feature>
<feature type="sequence variant" id="VAR_049183" description="In dbSNP:rs35822762.">
    <original>W</original>
    <variation>R</variation>
    <location>
        <position position="88"/>
    </location>
</feature>
<accession>O15130</accession>
<accession>Q3SXL4</accession>